<sequence>MALTKAEMAEKLFDEVGLNKREAKEFVDAFFDVLREALEQGRQVKLSGFGNFDLRRKNQRPGRNPKTGEEIPISARTVVTFRPGQKLKERVEAYAGSGQ</sequence>
<feature type="chain" id="PRO_1000122171" description="Integration host factor subunit alpha">
    <location>
        <begin position="1"/>
        <end position="99"/>
    </location>
</feature>
<keyword id="KW-0233">DNA recombination</keyword>
<keyword id="KW-0238">DNA-binding</keyword>
<keyword id="KW-1185">Reference proteome</keyword>
<keyword id="KW-0804">Transcription</keyword>
<keyword id="KW-0805">Transcription regulation</keyword>
<keyword id="KW-0810">Translation regulation</keyword>
<reference key="1">
    <citation type="journal article" date="2008" name="Genome Biol.">
        <title>The complete genome, comparative and functional analysis of Stenotrophomonas maltophilia reveals an organism heavily shielded by drug resistance determinants.</title>
        <authorList>
            <person name="Crossman L.C."/>
            <person name="Gould V.C."/>
            <person name="Dow J.M."/>
            <person name="Vernikos G.S."/>
            <person name="Okazaki A."/>
            <person name="Sebaihia M."/>
            <person name="Saunders D."/>
            <person name="Arrowsmith C."/>
            <person name="Carver T."/>
            <person name="Peters N."/>
            <person name="Adlem E."/>
            <person name="Kerhornou A."/>
            <person name="Lord A."/>
            <person name="Murphy L."/>
            <person name="Seeger K."/>
            <person name="Squares R."/>
            <person name="Rutter S."/>
            <person name="Quail M.A."/>
            <person name="Rajandream M.A."/>
            <person name="Harris D."/>
            <person name="Churcher C."/>
            <person name="Bentley S.D."/>
            <person name="Parkhill J."/>
            <person name="Thomson N.R."/>
            <person name="Avison M.B."/>
        </authorList>
    </citation>
    <scope>NUCLEOTIDE SEQUENCE [LARGE SCALE GENOMIC DNA]</scope>
    <source>
        <strain>K279a</strain>
    </source>
</reference>
<gene>
    <name evidence="1" type="primary">ihfA</name>
    <name evidence="1" type="synonym">himA</name>
    <name type="ordered locus">Smlt3372</name>
</gene>
<organism>
    <name type="scientific">Stenotrophomonas maltophilia (strain K279a)</name>
    <dbReference type="NCBI Taxonomy" id="522373"/>
    <lineage>
        <taxon>Bacteria</taxon>
        <taxon>Pseudomonadati</taxon>
        <taxon>Pseudomonadota</taxon>
        <taxon>Gammaproteobacteria</taxon>
        <taxon>Lysobacterales</taxon>
        <taxon>Lysobacteraceae</taxon>
        <taxon>Stenotrophomonas</taxon>
        <taxon>Stenotrophomonas maltophilia group</taxon>
    </lineage>
</organism>
<protein>
    <recommendedName>
        <fullName evidence="1">Integration host factor subunit alpha</fullName>
        <shortName evidence="1">IHF-alpha</shortName>
    </recommendedName>
</protein>
<dbReference type="EMBL" id="AM743169">
    <property type="protein sequence ID" value="CAQ46800.1"/>
    <property type="molecule type" value="Genomic_DNA"/>
</dbReference>
<dbReference type="RefSeq" id="WP_005410432.1">
    <property type="nucleotide sequence ID" value="NC_010943.1"/>
</dbReference>
<dbReference type="SMR" id="B2FN73"/>
<dbReference type="EnsemblBacteria" id="CAQ46800">
    <property type="protein sequence ID" value="CAQ46800"/>
    <property type="gene ID" value="Smlt3372"/>
</dbReference>
<dbReference type="KEGG" id="sml:Smlt3372"/>
<dbReference type="eggNOG" id="COG0776">
    <property type="taxonomic scope" value="Bacteria"/>
</dbReference>
<dbReference type="HOGENOM" id="CLU_105066_1_3_6"/>
<dbReference type="Proteomes" id="UP000008840">
    <property type="component" value="Chromosome"/>
</dbReference>
<dbReference type="GO" id="GO:0005829">
    <property type="term" value="C:cytosol"/>
    <property type="evidence" value="ECO:0007669"/>
    <property type="project" value="TreeGrafter"/>
</dbReference>
<dbReference type="GO" id="GO:0003677">
    <property type="term" value="F:DNA binding"/>
    <property type="evidence" value="ECO:0007669"/>
    <property type="project" value="UniProtKB-UniRule"/>
</dbReference>
<dbReference type="GO" id="GO:0030527">
    <property type="term" value="F:structural constituent of chromatin"/>
    <property type="evidence" value="ECO:0007669"/>
    <property type="project" value="InterPro"/>
</dbReference>
<dbReference type="GO" id="GO:0006310">
    <property type="term" value="P:DNA recombination"/>
    <property type="evidence" value="ECO:0007669"/>
    <property type="project" value="UniProtKB-UniRule"/>
</dbReference>
<dbReference type="GO" id="GO:0009893">
    <property type="term" value="P:positive regulation of metabolic process"/>
    <property type="evidence" value="ECO:0007669"/>
    <property type="project" value="UniProtKB-ARBA"/>
</dbReference>
<dbReference type="GO" id="GO:0006355">
    <property type="term" value="P:regulation of DNA-templated transcription"/>
    <property type="evidence" value="ECO:0007669"/>
    <property type="project" value="UniProtKB-UniRule"/>
</dbReference>
<dbReference type="GO" id="GO:0006417">
    <property type="term" value="P:regulation of translation"/>
    <property type="evidence" value="ECO:0007669"/>
    <property type="project" value="UniProtKB-UniRule"/>
</dbReference>
<dbReference type="CDD" id="cd13835">
    <property type="entry name" value="IHF_A"/>
    <property type="match status" value="1"/>
</dbReference>
<dbReference type="FunFam" id="4.10.520.10:FF:000002">
    <property type="entry name" value="Integration host factor subunit alpha"/>
    <property type="match status" value="1"/>
</dbReference>
<dbReference type="Gene3D" id="4.10.520.10">
    <property type="entry name" value="IHF-like DNA-binding proteins"/>
    <property type="match status" value="1"/>
</dbReference>
<dbReference type="HAMAP" id="MF_00380">
    <property type="entry name" value="IHF_alpha"/>
    <property type="match status" value="1"/>
</dbReference>
<dbReference type="InterPro" id="IPR000119">
    <property type="entry name" value="Hist_DNA-bd"/>
</dbReference>
<dbReference type="InterPro" id="IPR020816">
    <property type="entry name" value="Histone-like_DNA-bd_CS"/>
</dbReference>
<dbReference type="InterPro" id="IPR010992">
    <property type="entry name" value="IHF-like_DNA-bd_dom_sf"/>
</dbReference>
<dbReference type="InterPro" id="IPR005684">
    <property type="entry name" value="IHF_alpha"/>
</dbReference>
<dbReference type="NCBIfam" id="TIGR00987">
    <property type="entry name" value="himA"/>
    <property type="match status" value="1"/>
</dbReference>
<dbReference type="NCBIfam" id="NF001401">
    <property type="entry name" value="PRK00285.1"/>
    <property type="match status" value="1"/>
</dbReference>
<dbReference type="PANTHER" id="PTHR33175">
    <property type="entry name" value="DNA-BINDING PROTEIN HU"/>
    <property type="match status" value="1"/>
</dbReference>
<dbReference type="PANTHER" id="PTHR33175:SF2">
    <property type="entry name" value="INTEGRATION HOST FACTOR SUBUNIT ALPHA"/>
    <property type="match status" value="1"/>
</dbReference>
<dbReference type="Pfam" id="PF00216">
    <property type="entry name" value="Bac_DNA_binding"/>
    <property type="match status" value="1"/>
</dbReference>
<dbReference type="PRINTS" id="PR01727">
    <property type="entry name" value="DNABINDINGHU"/>
</dbReference>
<dbReference type="SMART" id="SM00411">
    <property type="entry name" value="BHL"/>
    <property type="match status" value="1"/>
</dbReference>
<dbReference type="SUPFAM" id="SSF47729">
    <property type="entry name" value="IHF-like DNA-binding proteins"/>
    <property type="match status" value="1"/>
</dbReference>
<dbReference type="PROSITE" id="PS00045">
    <property type="entry name" value="HISTONE_LIKE"/>
    <property type="match status" value="1"/>
</dbReference>
<proteinExistence type="inferred from homology"/>
<comment type="function">
    <text evidence="1">This protein is one of the two subunits of integration host factor, a specific DNA-binding protein that functions in genetic recombination as well as in transcriptional and translational control.</text>
</comment>
<comment type="subunit">
    <text evidence="1">Heterodimer of an alpha and a beta chain.</text>
</comment>
<comment type="similarity">
    <text evidence="1">Belongs to the bacterial histone-like protein family.</text>
</comment>
<evidence type="ECO:0000255" key="1">
    <source>
        <dbReference type="HAMAP-Rule" id="MF_00380"/>
    </source>
</evidence>
<name>IHFA_STRMK</name>
<accession>B2FN73</accession>